<gene>
    <name evidence="1" type="primary">deoB</name>
    <name type="ordered locus">VP2434</name>
</gene>
<keyword id="KW-0963">Cytoplasm</keyword>
<keyword id="KW-0413">Isomerase</keyword>
<keyword id="KW-0464">Manganese</keyword>
<keyword id="KW-0479">Metal-binding</keyword>
<name>DEOB_VIBPA</name>
<comment type="function">
    <text evidence="1">Isomerase that catalyzes the conversion of deoxy-ribose 1-phosphate (dRib-1-P) and ribose 1-phosphate (Rib-1-P) to deoxy-ribose 5-phosphate (dRib-5-P) and ribose 5-phosphate (Rib-5-P), respectively.</text>
</comment>
<comment type="catalytic activity">
    <reaction evidence="1">
        <text>2-deoxy-alpha-D-ribose 1-phosphate = 2-deoxy-D-ribose 5-phosphate</text>
        <dbReference type="Rhea" id="RHEA:27658"/>
        <dbReference type="ChEBI" id="CHEBI:57259"/>
        <dbReference type="ChEBI" id="CHEBI:62877"/>
        <dbReference type="EC" id="5.4.2.7"/>
    </reaction>
</comment>
<comment type="catalytic activity">
    <reaction evidence="1">
        <text>alpha-D-ribose 1-phosphate = D-ribose 5-phosphate</text>
        <dbReference type="Rhea" id="RHEA:18793"/>
        <dbReference type="ChEBI" id="CHEBI:57720"/>
        <dbReference type="ChEBI" id="CHEBI:78346"/>
        <dbReference type="EC" id="5.4.2.7"/>
    </reaction>
</comment>
<comment type="cofactor">
    <cofactor evidence="1">
        <name>Mn(2+)</name>
        <dbReference type="ChEBI" id="CHEBI:29035"/>
    </cofactor>
    <text evidence="1">Binds 2 manganese ions.</text>
</comment>
<comment type="pathway">
    <text evidence="1">Carbohydrate degradation; 2-deoxy-D-ribose 1-phosphate degradation; D-glyceraldehyde 3-phosphate and acetaldehyde from 2-deoxy-alpha-D-ribose 1-phosphate: step 1/2.</text>
</comment>
<comment type="subcellular location">
    <subcellularLocation>
        <location evidence="1">Cytoplasm</location>
    </subcellularLocation>
</comment>
<comment type="similarity">
    <text evidence="1">Belongs to the phosphopentomutase family.</text>
</comment>
<protein>
    <recommendedName>
        <fullName evidence="1">Phosphopentomutase</fullName>
        <ecNumber evidence="1">5.4.2.7</ecNumber>
    </recommendedName>
    <alternativeName>
        <fullName evidence="1">Phosphodeoxyribomutase</fullName>
    </alternativeName>
</protein>
<dbReference type="EC" id="5.4.2.7" evidence="1"/>
<dbReference type="EMBL" id="BA000031">
    <property type="protein sequence ID" value="BAC60697.1"/>
    <property type="molecule type" value="Genomic_DNA"/>
</dbReference>
<dbReference type="RefSeq" id="NP_798813.1">
    <property type="nucleotide sequence ID" value="NC_004603.1"/>
</dbReference>
<dbReference type="RefSeq" id="WP_005456086.1">
    <property type="nucleotide sequence ID" value="NC_004603.1"/>
</dbReference>
<dbReference type="SMR" id="Q87M24"/>
<dbReference type="GeneID" id="1189947"/>
<dbReference type="KEGG" id="vpa:VP2434"/>
<dbReference type="PATRIC" id="fig|223926.6.peg.2335"/>
<dbReference type="eggNOG" id="COG1015">
    <property type="taxonomic scope" value="Bacteria"/>
</dbReference>
<dbReference type="HOGENOM" id="CLU_053861_0_0_6"/>
<dbReference type="UniPathway" id="UPA00002">
    <property type="reaction ID" value="UER00467"/>
</dbReference>
<dbReference type="Proteomes" id="UP000002493">
    <property type="component" value="Chromosome 1"/>
</dbReference>
<dbReference type="GO" id="GO:0005829">
    <property type="term" value="C:cytosol"/>
    <property type="evidence" value="ECO:0007669"/>
    <property type="project" value="TreeGrafter"/>
</dbReference>
<dbReference type="GO" id="GO:0000287">
    <property type="term" value="F:magnesium ion binding"/>
    <property type="evidence" value="ECO:0007669"/>
    <property type="project" value="InterPro"/>
</dbReference>
<dbReference type="GO" id="GO:0030145">
    <property type="term" value="F:manganese ion binding"/>
    <property type="evidence" value="ECO:0007669"/>
    <property type="project" value="UniProtKB-UniRule"/>
</dbReference>
<dbReference type="GO" id="GO:0008973">
    <property type="term" value="F:phosphopentomutase activity"/>
    <property type="evidence" value="ECO:0007669"/>
    <property type="project" value="UniProtKB-UniRule"/>
</dbReference>
<dbReference type="GO" id="GO:0006018">
    <property type="term" value="P:2-deoxyribose 1-phosphate catabolic process"/>
    <property type="evidence" value="ECO:0007669"/>
    <property type="project" value="UniProtKB-UniRule"/>
</dbReference>
<dbReference type="GO" id="GO:0006015">
    <property type="term" value="P:5-phosphoribose 1-diphosphate biosynthetic process"/>
    <property type="evidence" value="ECO:0007669"/>
    <property type="project" value="UniProtKB-UniPathway"/>
</dbReference>
<dbReference type="GO" id="GO:0043094">
    <property type="term" value="P:metabolic compound salvage"/>
    <property type="evidence" value="ECO:0007669"/>
    <property type="project" value="InterPro"/>
</dbReference>
<dbReference type="GO" id="GO:0009117">
    <property type="term" value="P:nucleotide metabolic process"/>
    <property type="evidence" value="ECO:0007669"/>
    <property type="project" value="InterPro"/>
</dbReference>
<dbReference type="CDD" id="cd16009">
    <property type="entry name" value="PPM"/>
    <property type="match status" value="1"/>
</dbReference>
<dbReference type="FunFam" id="3.30.70.1250:FF:000001">
    <property type="entry name" value="Phosphopentomutase"/>
    <property type="match status" value="1"/>
</dbReference>
<dbReference type="Gene3D" id="3.40.720.10">
    <property type="entry name" value="Alkaline Phosphatase, subunit A"/>
    <property type="match status" value="1"/>
</dbReference>
<dbReference type="Gene3D" id="3.30.70.1250">
    <property type="entry name" value="Phosphopentomutase"/>
    <property type="match status" value="1"/>
</dbReference>
<dbReference type="HAMAP" id="MF_00740">
    <property type="entry name" value="Phosphopentomut"/>
    <property type="match status" value="1"/>
</dbReference>
<dbReference type="InterPro" id="IPR017850">
    <property type="entry name" value="Alkaline_phosphatase_core_sf"/>
</dbReference>
<dbReference type="InterPro" id="IPR010045">
    <property type="entry name" value="DeoB"/>
</dbReference>
<dbReference type="InterPro" id="IPR006124">
    <property type="entry name" value="Metalloenzyme"/>
</dbReference>
<dbReference type="InterPro" id="IPR024052">
    <property type="entry name" value="Phosphopentomutase_DeoB_cap_sf"/>
</dbReference>
<dbReference type="NCBIfam" id="TIGR01696">
    <property type="entry name" value="deoB"/>
    <property type="match status" value="1"/>
</dbReference>
<dbReference type="NCBIfam" id="NF003766">
    <property type="entry name" value="PRK05362.1"/>
    <property type="match status" value="1"/>
</dbReference>
<dbReference type="PANTHER" id="PTHR21110">
    <property type="entry name" value="PHOSPHOPENTOMUTASE"/>
    <property type="match status" value="1"/>
</dbReference>
<dbReference type="PANTHER" id="PTHR21110:SF0">
    <property type="entry name" value="PHOSPHOPENTOMUTASE"/>
    <property type="match status" value="1"/>
</dbReference>
<dbReference type="Pfam" id="PF01676">
    <property type="entry name" value="Metalloenzyme"/>
    <property type="match status" value="1"/>
</dbReference>
<dbReference type="PIRSF" id="PIRSF001491">
    <property type="entry name" value="Ppentomutase"/>
    <property type="match status" value="1"/>
</dbReference>
<dbReference type="SUPFAM" id="SSF53649">
    <property type="entry name" value="Alkaline phosphatase-like"/>
    <property type="match status" value="1"/>
</dbReference>
<dbReference type="SUPFAM" id="SSF143856">
    <property type="entry name" value="DeoB insert domain-like"/>
    <property type="match status" value="1"/>
</dbReference>
<feature type="chain" id="PRO_0000199862" description="Phosphopentomutase">
    <location>
        <begin position="1"/>
        <end position="406"/>
    </location>
</feature>
<feature type="binding site" evidence="1">
    <location>
        <position position="10"/>
    </location>
    <ligand>
        <name>Mn(2+)</name>
        <dbReference type="ChEBI" id="CHEBI:29035"/>
        <label>1</label>
    </ligand>
</feature>
<feature type="binding site" evidence="1">
    <location>
        <position position="305"/>
    </location>
    <ligand>
        <name>Mn(2+)</name>
        <dbReference type="ChEBI" id="CHEBI:29035"/>
        <label>2</label>
    </ligand>
</feature>
<feature type="binding site" evidence="1">
    <location>
        <position position="310"/>
    </location>
    <ligand>
        <name>Mn(2+)</name>
        <dbReference type="ChEBI" id="CHEBI:29035"/>
        <label>2</label>
    </ligand>
</feature>
<feature type="binding site" evidence="1">
    <location>
        <position position="346"/>
    </location>
    <ligand>
        <name>Mn(2+)</name>
        <dbReference type="ChEBI" id="CHEBI:29035"/>
        <label>1</label>
    </ligand>
</feature>
<feature type="binding site" evidence="1">
    <location>
        <position position="347"/>
    </location>
    <ligand>
        <name>Mn(2+)</name>
        <dbReference type="ChEBI" id="CHEBI:29035"/>
        <label>1</label>
    </ligand>
</feature>
<feature type="binding site" evidence="1">
    <location>
        <position position="358"/>
    </location>
    <ligand>
        <name>Mn(2+)</name>
        <dbReference type="ChEBI" id="CHEBI:29035"/>
        <label>2</label>
    </ligand>
</feature>
<organism>
    <name type="scientific">Vibrio parahaemolyticus serotype O3:K6 (strain RIMD 2210633)</name>
    <dbReference type="NCBI Taxonomy" id="223926"/>
    <lineage>
        <taxon>Bacteria</taxon>
        <taxon>Pseudomonadati</taxon>
        <taxon>Pseudomonadota</taxon>
        <taxon>Gammaproteobacteria</taxon>
        <taxon>Vibrionales</taxon>
        <taxon>Vibrionaceae</taxon>
        <taxon>Vibrio</taxon>
    </lineage>
</organism>
<evidence type="ECO:0000255" key="1">
    <source>
        <dbReference type="HAMAP-Rule" id="MF_00740"/>
    </source>
</evidence>
<proteinExistence type="inferred from homology"/>
<sequence>MKRAFILVLDSFGIGATADAKEFGDVGSDTLGHIADQCEKGLADNDKRQGALRLPNLSKLGLAMAHKESTGRFAPGLDADAEIIGAYGHAAELSSGKDTPSGHWEIAGVPVLFDWGYFTDKANSFPKELTDRILERAGLDGFLGNCHASGTQVLDDLGEEHMKTGQPIFYTSADSVFQIACHEETFGLDRLLELCQIAREELEDYNIGRVIARPFIGPGKGQFERTGNRRDLSVEPPSATVLQKLVEEKQGNVVSIGKIADIYANCGITKKVKATGIPALFEATLEQIKEAGDNTIVFTNFVDFDSAYGHRRDVAGYAAALEYFDGRINEVLELMGEDDVLILTADHGCDPTWPGTDHTREHIPVLVYGQKVPAGSLGRRETFADIGQTLASYFGTSPMDYGKNFL</sequence>
<accession>Q87M24</accession>
<reference key="1">
    <citation type="journal article" date="2003" name="Lancet">
        <title>Genome sequence of Vibrio parahaemolyticus: a pathogenic mechanism distinct from that of V. cholerae.</title>
        <authorList>
            <person name="Makino K."/>
            <person name="Oshima K."/>
            <person name="Kurokawa K."/>
            <person name="Yokoyama K."/>
            <person name="Uda T."/>
            <person name="Tagomori K."/>
            <person name="Iijima Y."/>
            <person name="Najima M."/>
            <person name="Nakano M."/>
            <person name="Yamashita A."/>
            <person name="Kubota Y."/>
            <person name="Kimura S."/>
            <person name="Yasunaga T."/>
            <person name="Honda T."/>
            <person name="Shinagawa H."/>
            <person name="Hattori M."/>
            <person name="Iida T."/>
        </authorList>
    </citation>
    <scope>NUCLEOTIDE SEQUENCE [LARGE SCALE GENOMIC DNA]</scope>
    <source>
        <strain>RIMD 2210633</strain>
    </source>
</reference>